<feature type="chain" id="PRO_1000018970" description="Bifunctional purine biosynthesis protein PurH">
    <location>
        <begin position="1"/>
        <end position="515"/>
    </location>
</feature>
<feature type="domain" description="MGS-like" evidence="2">
    <location>
        <begin position="1"/>
        <end position="145"/>
    </location>
</feature>
<protein>
    <recommendedName>
        <fullName evidence="1">Bifunctional purine biosynthesis protein PurH</fullName>
    </recommendedName>
    <domain>
        <recommendedName>
            <fullName evidence="1">Phosphoribosylaminoimidazolecarboxamide formyltransferase</fullName>
            <ecNumber evidence="1">2.1.2.3</ecNumber>
        </recommendedName>
        <alternativeName>
            <fullName evidence="1">AICAR transformylase</fullName>
        </alternativeName>
    </domain>
    <domain>
        <recommendedName>
            <fullName evidence="1">IMP cyclohydrolase</fullName>
            <ecNumber evidence="1">3.5.4.10</ecNumber>
        </recommendedName>
        <alternativeName>
            <fullName evidence="1">ATIC</fullName>
        </alternativeName>
        <alternativeName>
            <fullName evidence="1">IMP synthase</fullName>
        </alternativeName>
        <alternativeName>
            <fullName evidence="1">Inosinicase</fullName>
        </alternativeName>
    </domain>
</protein>
<proteinExistence type="inferred from homology"/>
<evidence type="ECO:0000255" key="1">
    <source>
        <dbReference type="HAMAP-Rule" id="MF_00139"/>
    </source>
</evidence>
<evidence type="ECO:0000255" key="2">
    <source>
        <dbReference type="PROSITE-ProRule" id="PRU01202"/>
    </source>
</evidence>
<keyword id="KW-0378">Hydrolase</keyword>
<keyword id="KW-0511">Multifunctional enzyme</keyword>
<keyword id="KW-0658">Purine biosynthesis</keyword>
<keyword id="KW-0808">Transferase</keyword>
<reference key="1">
    <citation type="journal article" date="2006" name="Proc. Natl. Acad. Sci. U.S.A.">
        <title>Molecular genetic anatomy of inter- and intraserotype variation in the human bacterial pathogen group A Streptococcus.</title>
        <authorList>
            <person name="Beres S.B."/>
            <person name="Richter E.W."/>
            <person name="Nagiec M.J."/>
            <person name="Sumby P."/>
            <person name="Porcella S.F."/>
            <person name="DeLeo F.R."/>
            <person name="Musser J.M."/>
        </authorList>
    </citation>
    <scope>NUCLEOTIDE SEQUENCE [LARGE SCALE GENOMIC DNA]</scope>
    <source>
        <strain>MGAS10270</strain>
    </source>
</reference>
<comment type="catalytic activity">
    <reaction evidence="1">
        <text>(6R)-10-formyltetrahydrofolate + 5-amino-1-(5-phospho-beta-D-ribosyl)imidazole-4-carboxamide = 5-formamido-1-(5-phospho-D-ribosyl)imidazole-4-carboxamide + (6S)-5,6,7,8-tetrahydrofolate</text>
        <dbReference type="Rhea" id="RHEA:22192"/>
        <dbReference type="ChEBI" id="CHEBI:57453"/>
        <dbReference type="ChEBI" id="CHEBI:58467"/>
        <dbReference type="ChEBI" id="CHEBI:58475"/>
        <dbReference type="ChEBI" id="CHEBI:195366"/>
        <dbReference type="EC" id="2.1.2.3"/>
    </reaction>
</comment>
<comment type="catalytic activity">
    <reaction evidence="1">
        <text>IMP + H2O = 5-formamido-1-(5-phospho-D-ribosyl)imidazole-4-carboxamide</text>
        <dbReference type="Rhea" id="RHEA:18445"/>
        <dbReference type="ChEBI" id="CHEBI:15377"/>
        <dbReference type="ChEBI" id="CHEBI:58053"/>
        <dbReference type="ChEBI" id="CHEBI:58467"/>
        <dbReference type="EC" id="3.5.4.10"/>
    </reaction>
</comment>
<comment type="pathway">
    <text evidence="1">Purine metabolism; IMP biosynthesis via de novo pathway; 5-formamido-1-(5-phospho-D-ribosyl)imidazole-4-carboxamide from 5-amino-1-(5-phospho-D-ribosyl)imidazole-4-carboxamide (10-formyl THF route): step 1/1.</text>
</comment>
<comment type="pathway">
    <text evidence="1">Purine metabolism; IMP biosynthesis via de novo pathway; IMP from 5-formamido-1-(5-phospho-D-ribosyl)imidazole-4-carboxamide: step 1/1.</text>
</comment>
<comment type="domain">
    <text evidence="1">The IMP cyclohydrolase activity resides in the N-terminal region.</text>
</comment>
<comment type="similarity">
    <text evidence="1">Belongs to the PurH family.</text>
</comment>
<sequence length="515" mass="56298">MTKRALISVSDKSGIVDFAKELKNLGWDIISTGGTKVALDDAGVETIAIDDVTGFPEMMDGRVKTLHPNIHGGLLARRDADSHLQAAKDNNIELIDLVVVNLYPFKETILRPDITYDLAVENIDIGGPSMLRSAAKNHASVTVVVDPADYATVLGELADAGQTTFETRQRLAAKVFRHTAAYDALIAEYFTTQVGEARPEKLTITYDLKQAMRYGENPQQDADFYQKALPTDYSIASAKQLNGKELSFNNIRDADAAIRIIRDFKDRPTVVVLKHMNPCGIGQADDIETAWDYAYEADPVSIFGGIVVLNREVDAATAKKMHPIFLEIIIAPSYSEEALAIFTNKKKNLRILELPFDAQAASEVEAEYTGVVGGLLVQNQDVVAENPSDWQVVTDRQPTEQEATALEFAWKAIKYVKSNGIIITNDHMTLGLGAGQTNRVGSVKIAIEQAKDHLDGTVLASDAFFPFADNIEEIAAAGIKAIIQPGGSVRDQDSIDAANKHGLTMIFTGVRHFRH</sequence>
<accession>Q1JJ80</accession>
<organism>
    <name type="scientific">Streptococcus pyogenes serotype M2 (strain MGAS10270)</name>
    <dbReference type="NCBI Taxonomy" id="370552"/>
    <lineage>
        <taxon>Bacteria</taxon>
        <taxon>Bacillati</taxon>
        <taxon>Bacillota</taxon>
        <taxon>Bacilli</taxon>
        <taxon>Lactobacillales</taxon>
        <taxon>Streptococcaceae</taxon>
        <taxon>Streptococcus</taxon>
    </lineage>
</organism>
<dbReference type="EC" id="2.1.2.3" evidence="1"/>
<dbReference type="EC" id="3.5.4.10" evidence="1"/>
<dbReference type="EMBL" id="CP000260">
    <property type="protein sequence ID" value="ABF33093.1"/>
    <property type="molecule type" value="Genomic_DNA"/>
</dbReference>
<dbReference type="SMR" id="Q1JJ80"/>
<dbReference type="KEGG" id="sph:MGAS10270_Spy0028"/>
<dbReference type="HOGENOM" id="CLU_016316_5_2_9"/>
<dbReference type="UniPathway" id="UPA00074">
    <property type="reaction ID" value="UER00133"/>
</dbReference>
<dbReference type="UniPathway" id="UPA00074">
    <property type="reaction ID" value="UER00135"/>
</dbReference>
<dbReference type="Proteomes" id="UP000002436">
    <property type="component" value="Chromosome"/>
</dbReference>
<dbReference type="GO" id="GO:0005829">
    <property type="term" value="C:cytosol"/>
    <property type="evidence" value="ECO:0007669"/>
    <property type="project" value="TreeGrafter"/>
</dbReference>
<dbReference type="GO" id="GO:0003937">
    <property type="term" value="F:IMP cyclohydrolase activity"/>
    <property type="evidence" value="ECO:0007669"/>
    <property type="project" value="UniProtKB-UniRule"/>
</dbReference>
<dbReference type="GO" id="GO:0004643">
    <property type="term" value="F:phosphoribosylaminoimidazolecarboxamide formyltransferase activity"/>
    <property type="evidence" value="ECO:0007669"/>
    <property type="project" value="UniProtKB-UniRule"/>
</dbReference>
<dbReference type="GO" id="GO:0006189">
    <property type="term" value="P:'de novo' IMP biosynthetic process"/>
    <property type="evidence" value="ECO:0007669"/>
    <property type="project" value="UniProtKB-UniRule"/>
</dbReference>
<dbReference type="CDD" id="cd01421">
    <property type="entry name" value="IMPCH"/>
    <property type="match status" value="1"/>
</dbReference>
<dbReference type="FunFam" id="3.40.140.20:FF:000001">
    <property type="entry name" value="Bifunctional purine biosynthesis protein PurH"/>
    <property type="match status" value="1"/>
</dbReference>
<dbReference type="FunFam" id="3.40.140.20:FF:000002">
    <property type="entry name" value="Bifunctional purine biosynthesis protein PurH"/>
    <property type="match status" value="1"/>
</dbReference>
<dbReference type="FunFam" id="3.40.50.1380:FF:000001">
    <property type="entry name" value="Bifunctional purine biosynthesis protein PurH"/>
    <property type="match status" value="1"/>
</dbReference>
<dbReference type="Gene3D" id="3.40.140.20">
    <property type="match status" value="2"/>
</dbReference>
<dbReference type="Gene3D" id="3.40.50.1380">
    <property type="entry name" value="Methylglyoxal synthase-like domain"/>
    <property type="match status" value="1"/>
</dbReference>
<dbReference type="HAMAP" id="MF_00139">
    <property type="entry name" value="PurH"/>
    <property type="match status" value="1"/>
</dbReference>
<dbReference type="InterPro" id="IPR024051">
    <property type="entry name" value="AICAR_Tfase_dup_dom_sf"/>
</dbReference>
<dbReference type="InterPro" id="IPR016193">
    <property type="entry name" value="Cytidine_deaminase-like"/>
</dbReference>
<dbReference type="InterPro" id="IPR011607">
    <property type="entry name" value="MGS-like_dom"/>
</dbReference>
<dbReference type="InterPro" id="IPR036914">
    <property type="entry name" value="MGS-like_dom_sf"/>
</dbReference>
<dbReference type="InterPro" id="IPR002695">
    <property type="entry name" value="PurH-like"/>
</dbReference>
<dbReference type="NCBIfam" id="NF002049">
    <property type="entry name" value="PRK00881.1"/>
    <property type="match status" value="1"/>
</dbReference>
<dbReference type="NCBIfam" id="TIGR00355">
    <property type="entry name" value="purH"/>
    <property type="match status" value="1"/>
</dbReference>
<dbReference type="PANTHER" id="PTHR11692:SF0">
    <property type="entry name" value="BIFUNCTIONAL PURINE BIOSYNTHESIS PROTEIN ATIC"/>
    <property type="match status" value="1"/>
</dbReference>
<dbReference type="PANTHER" id="PTHR11692">
    <property type="entry name" value="BIFUNCTIONAL PURINE BIOSYNTHESIS PROTEIN PURH"/>
    <property type="match status" value="1"/>
</dbReference>
<dbReference type="Pfam" id="PF01808">
    <property type="entry name" value="AICARFT_IMPCHas"/>
    <property type="match status" value="1"/>
</dbReference>
<dbReference type="Pfam" id="PF02142">
    <property type="entry name" value="MGS"/>
    <property type="match status" value="1"/>
</dbReference>
<dbReference type="PIRSF" id="PIRSF000414">
    <property type="entry name" value="AICARFT_IMPCHas"/>
    <property type="match status" value="1"/>
</dbReference>
<dbReference type="SMART" id="SM00798">
    <property type="entry name" value="AICARFT_IMPCHas"/>
    <property type="match status" value="1"/>
</dbReference>
<dbReference type="SMART" id="SM00851">
    <property type="entry name" value="MGS"/>
    <property type="match status" value="1"/>
</dbReference>
<dbReference type="SUPFAM" id="SSF53927">
    <property type="entry name" value="Cytidine deaminase-like"/>
    <property type="match status" value="1"/>
</dbReference>
<dbReference type="SUPFAM" id="SSF52335">
    <property type="entry name" value="Methylglyoxal synthase-like"/>
    <property type="match status" value="1"/>
</dbReference>
<dbReference type="PROSITE" id="PS51855">
    <property type="entry name" value="MGS"/>
    <property type="match status" value="1"/>
</dbReference>
<gene>
    <name evidence="1" type="primary">purH</name>
    <name type="ordered locus">MGAS10270_Spy0028</name>
</gene>
<name>PUR9_STRPD</name>